<evidence type="ECO:0000250" key="1"/>
<evidence type="ECO:0000250" key="2">
    <source>
        <dbReference type="UniProtKB" id="A0R2B1"/>
    </source>
</evidence>
<evidence type="ECO:0000255" key="3"/>
<evidence type="ECO:0000256" key="4">
    <source>
        <dbReference type="SAM" id="MobiDB-lite"/>
    </source>
</evidence>
<evidence type="ECO:0000305" key="5"/>
<comment type="function">
    <text evidence="1">Shows three enzymatic activities that share a first common step, the attack of thiamine-PP on 2-oxoglutarate (alpha-ketoglutarate, KG), leading to the formation of an enamine-thiamine-PP intermediate upon decarboxylation. Thus, displays KGD activity, catalyzing the decarboxylation from five-carbon 2-oxoglutarate to four-carbon succinate semialdehyde (SSA). Also catalyzes C-C bond formation between the activated aldehyde formed after decarboxylation of alpha-ketoglutarate and the carbonyl of glyoxylate (GLX), to yield 2-hydroxy-3-oxoadipate (HOA), which spontaneously decarboxylates to form 5-hydroxylevulinate (HLA). And is also a component of the 2-oxoglutarate dehydrogenase (ODH) complex, that catalyzes the overall conversion of 2-oxoglutarate to succinyl-CoA and CO(2). The KG decarboxylase and KG dehydrogenase reactions provide two alternative, tightly regulated, pathways connecting the oxidative and reductive branches of the TCA cycle (By similarity).</text>
</comment>
<comment type="catalytic activity">
    <reaction>
        <text>glyoxylate + 2-oxoglutarate + H(+) = 2-hydroxy-3-oxoadipate + CO2</text>
        <dbReference type="Rhea" id="RHEA:14341"/>
        <dbReference type="ChEBI" id="CHEBI:15378"/>
        <dbReference type="ChEBI" id="CHEBI:16526"/>
        <dbReference type="ChEBI" id="CHEBI:16810"/>
        <dbReference type="ChEBI" id="CHEBI:36655"/>
        <dbReference type="ChEBI" id="CHEBI:57712"/>
        <dbReference type="EC" id="2.2.1.5"/>
    </reaction>
</comment>
<comment type="catalytic activity">
    <reaction>
        <text>2-oxoglutarate + H(+) = succinate semialdehyde + CO2</text>
        <dbReference type="Rhea" id="RHEA:10524"/>
        <dbReference type="ChEBI" id="CHEBI:15378"/>
        <dbReference type="ChEBI" id="CHEBI:16526"/>
        <dbReference type="ChEBI" id="CHEBI:16810"/>
        <dbReference type="ChEBI" id="CHEBI:57706"/>
        <dbReference type="EC" id="4.1.1.71"/>
    </reaction>
</comment>
<comment type="catalytic activity">
    <reaction>
        <text>N(6)-[(R)-lipoyl]-L-lysyl-[protein] + 2-oxoglutarate + H(+) = N(6)-[(R)-S(8)-succinyldihydrolipoyl]-L-lysyl-[protein] + CO2</text>
        <dbReference type="Rhea" id="RHEA:12188"/>
        <dbReference type="Rhea" id="RHEA-COMP:10474"/>
        <dbReference type="Rhea" id="RHEA-COMP:20092"/>
        <dbReference type="ChEBI" id="CHEBI:15378"/>
        <dbReference type="ChEBI" id="CHEBI:16526"/>
        <dbReference type="ChEBI" id="CHEBI:16810"/>
        <dbReference type="ChEBI" id="CHEBI:83099"/>
        <dbReference type="ChEBI" id="CHEBI:83120"/>
        <dbReference type="EC" id="1.2.4.2"/>
    </reaction>
</comment>
<comment type="catalytic activity">
    <reaction>
        <text>N(6)-[(R)-dihydrolipoyl]-L-lysyl-[protein] + succinyl-CoA = N(6)-[(R)-S(8)-succinyldihydrolipoyl]-L-lysyl-[protein] + CoA</text>
        <dbReference type="Rhea" id="RHEA:15213"/>
        <dbReference type="Rhea" id="RHEA-COMP:10475"/>
        <dbReference type="Rhea" id="RHEA-COMP:20092"/>
        <dbReference type="ChEBI" id="CHEBI:57287"/>
        <dbReference type="ChEBI" id="CHEBI:57292"/>
        <dbReference type="ChEBI" id="CHEBI:83100"/>
        <dbReference type="ChEBI" id="CHEBI:83120"/>
        <dbReference type="EC" id="2.3.1.61"/>
    </reaction>
</comment>
<comment type="cofactor">
    <cofactor evidence="1">
        <name>Mg(2+)</name>
        <dbReference type="ChEBI" id="CHEBI:18420"/>
    </cofactor>
</comment>
<comment type="cofactor">
    <cofactor evidence="1">
        <name>thiamine diphosphate</name>
        <dbReference type="ChEBI" id="CHEBI:58937"/>
    </cofactor>
</comment>
<comment type="activity regulation">
    <text evidence="1">Alpha-ketoglutarate dehydrogenase and decarboxylase activities are inhibited by unphosphorylated GarA, and allosterically activated by acetyl-CoA, the main substrate of the TCA cycle.</text>
</comment>
<comment type="pathway">
    <text>Carbohydrate metabolism; tricarboxylic acid cycle; succinate from 2-oxoglutarate (transferase route): step 1/2.</text>
</comment>
<comment type="pathway">
    <text>Carbohydrate metabolism; tricarboxylic acid cycle; succinyl-CoA from 2-oxoglutarate (dehydrogenase route): step 1/1.</text>
</comment>
<comment type="subunit">
    <text evidence="1">Homodimer. The 2-oxoglutarate dehydrogenase (ODH) complex contains multiple copies of three enzymatic components: 2-oxoglutarate dehydrogenase (E1), dihydrolipoamide succinyltransferase (E2) and lipoamide dehydrogenase (E3) (By similarity).</text>
</comment>
<comment type="domain">
    <text evidence="1">Is a fusion protein with two major domains exhibiting structural features of an E1 and E2 protein, and a short sequence stretch of E1 localized at the N-terminus, which is connected by a linker region to the rest of the protein.</text>
</comment>
<comment type="similarity">
    <text evidence="5">Belongs to the 2-oxoacid dehydrogenase family. Kgd subfamily.</text>
</comment>
<feature type="chain" id="PRO_0000310720" description="Multifunctional 2-oxoglutarate metabolism enzyme">
    <location>
        <begin position="1"/>
        <end position="1269"/>
    </location>
</feature>
<feature type="region of interest" description="2-oxoglutarate dehydrogenase E1, N-terminal part">
    <location>
        <begin position="1"/>
        <end position="41"/>
    </location>
</feature>
<feature type="region of interest" description="Disordered" evidence="4">
    <location>
        <begin position="23"/>
        <end position="145"/>
    </location>
</feature>
<feature type="region of interest" description="Linker">
    <location>
        <begin position="42"/>
        <end position="107"/>
    </location>
</feature>
<feature type="region of interest" description="Succinyltransferase E2">
    <location>
        <begin position="108"/>
        <end position="378"/>
    </location>
</feature>
<feature type="region of interest" description="2-oxoglutarate dehydrogenase E1, C-terminal part">
    <location>
        <begin position="379"/>
        <end position="1269"/>
    </location>
</feature>
<feature type="coiled-coil region" evidence="3">
    <location>
        <begin position="824"/>
        <end position="855"/>
    </location>
</feature>
<feature type="compositionally biased region" description="Basic and acidic residues" evidence="4">
    <location>
        <begin position="23"/>
        <end position="37"/>
    </location>
</feature>
<feature type="compositionally biased region" description="Polar residues" evidence="4">
    <location>
        <begin position="43"/>
        <end position="58"/>
    </location>
</feature>
<feature type="compositionally biased region" description="Pro residues" evidence="4">
    <location>
        <begin position="63"/>
        <end position="75"/>
    </location>
</feature>
<feature type="active site" description="Proton acceptor; for succinyltransferase activity" evidence="1">
    <location>
        <position position="357"/>
    </location>
</feature>
<feature type="binding site" evidence="2">
    <location>
        <position position="583"/>
    </location>
    <ligand>
        <name>thiamine diphosphate</name>
        <dbReference type="ChEBI" id="CHEBI:58937"/>
    </ligand>
</feature>
<feature type="binding site" evidence="2">
    <location>
        <position position="622"/>
    </location>
    <ligand>
        <name>2-oxoglutarate</name>
        <dbReference type="ChEBI" id="CHEBI:16810"/>
    </ligand>
</feature>
<feature type="binding site" evidence="2">
    <location>
        <position position="647"/>
    </location>
    <ligand>
        <name>2-oxoglutarate</name>
        <dbReference type="ChEBI" id="CHEBI:16810"/>
    </ligand>
</feature>
<feature type="binding site" evidence="2">
    <location>
        <position position="647"/>
    </location>
    <ligand>
        <name>thiamine diphosphate</name>
        <dbReference type="ChEBI" id="CHEBI:58937"/>
    </ligand>
</feature>
<feature type="binding site" evidence="2">
    <location>
        <position position="649"/>
    </location>
    <ligand>
        <name>thiamine diphosphate</name>
        <dbReference type="ChEBI" id="CHEBI:58937"/>
    </ligand>
</feature>
<feature type="binding site" evidence="2">
    <location>
        <position position="686"/>
    </location>
    <ligand>
        <name>Mg(2+)</name>
        <dbReference type="ChEBI" id="CHEBI:18420"/>
    </ligand>
</feature>
<feature type="binding site" evidence="2">
    <location>
        <position position="686"/>
    </location>
    <ligand>
        <name>thiamine diphosphate</name>
        <dbReference type="ChEBI" id="CHEBI:58937"/>
    </ligand>
</feature>
<feature type="binding site" evidence="2">
    <location>
        <position position="687"/>
    </location>
    <ligand>
        <name>thiamine diphosphate</name>
        <dbReference type="ChEBI" id="CHEBI:58937"/>
    </ligand>
</feature>
<feature type="binding site" evidence="2">
    <location>
        <position position="688"/>
    </location>
    <ligand>
        <name>thiamine diphosphate</name>
        <dbReference type="ChEBI" id="CHEBI:58937"/>
    </ligand>
</feature>
<feature type="binding site" evidence="2">
    <location>
        <position position="719"/>
    </location>
    <ligand>
        <name>Mg(2+)</name>
        <dbReference type="ChEBI" id="CHEBI:18420"/>
    </ligand>
</feature>
<feature type="binding site" evidence="2">
    <location>
        <position position="719"/>
    </location>
    <ligand>
        <name>thiamine diphosphate</name>
        <dbReference type="ChEBI" id="CHEBI:58937"/>
    </ligand>
</feature>
<feature type="binding site" evidence="2">
    <location>
        <position position="721"/>
    </location>
    <ligand>
        <name>Mg(2+)</name>
        <dbReference type="ChEBI" id="CHEBI:18420"/>
    </ligand>
</feature>
<feature type="binding site" evidence="2">
    <location>
        <position position="1061"/>
    </location>
    <ligand>
        <name>2-oxoglutarate</name>
        <dbReference type="ChEBI" id="CHEBI:16810"/>
    </ligand>
</feature>
<feature type="binding site" evidence="2">
    <location>
        <position position="1079"/>
    </location>
    <ligand>
        <name>acetyl-CoA</name>
        <dbReference type="ChEBI" id="CHEBI:57288"/>
        <note>allosteric activator</note>
    </ligand>
</feature>
<feature type="binding site" evidence="2">
    <location>
        <position position="1095"/>
    </location>
    <ligand>
        <name>acetyl-CoA</name>
        <dbReference type="ChEBI" id="CHEBI:57288"/>
        <note>allosteric activator</note>
    </ligand>
</feature>
<feature type="binding site" evidence="2">
    <location>
        <position position="1130"/>
    </location>
    <ligand>
        <name>acetyl-CoA</name>
        <dbReference type="ChEBI" id="CHEBI:57288"/>
        <note>allosteric activator</note>
    </ligand>
</feature>
<feature type="binding site" evidence="2">
    <location>
        <position position="1133"/>
    </location>
    <ligand>
        <name>acetyl-CoA</name>
        <dbReference type="ChEBI" id="CHEBI:57288"/>
        <note>allosteric activator</note>
    </ligand>
</feature>
<feature type="binding site" evidence="2">
    <location>
        <position position="1183"/>
    </location>
    <ligand>
        <name>acetyl-CoA</name>
        <dbReference type="ChEBI" id="CHEBI:57288"/>
        <note>allosteric activator</note>
    </ligand>
</feature>
<feature type="binding site" evidence="2">
    <location>
        <position position="1190"/>
    </location>
    <ligand>
        <name>acetyl-CoA</name>
        <dbReference type="ChEBI" id="CHEBI:57288"/>
        <note>allosteric activator</note>
    </ligand>
</feature>
<feature type="binding site" evidence="2">
    <location>
        <position position="1191"/>
    </location>
    <ligand>
        <name>acetyl-CoA</name>
        <dbReference type="ChEBI" id="CHEBI:57288"/>
        <note>allosteric activator</note>
    </ligand>
</feature>
<organism>
    <name type="scientific">Mycobacterium sp. (strain KMS)</name>
    <dbReference type="NCBI Taxonomy" id="189918"/>
    <lineage>
        <taxon>Bacteria</taxon>
        <taxon>Bacillati</taxon>
        <taxon>Actinomycetota</taxon>
        <taxon>Actinomycetes</taxon>
        <taxon>Mycobacteriales</taxon>
        <taxon>Mycobacteriaceae</taxon>
        <taxon>Mycobacterium</taxon>
    </lineage>
</organism>
<keyword id="KW-0012">Acyltransferase</keyword>
<keyword id="KW-0021">Allosteric enzyme</keyword>
<keyword id="KW-0175">Coiled coil</keyword>
<keyword id="KW-0210">Decarboxylase</keyword>
<keyword id="KW-0456">Lyase</keyword>
<keyword id="KW-0460">Magnesium</keyword>
<keyword id="KW-0479">Metal-binding</keyword>
<keyword id="KW-0511">Multifunctional enzyme</keyword>
<keyword id="KW-0560">Oxidoreductase</keyword>
<keyword id="KW-0786">Thiamine pyrophosphate</keyword>
<keyword id="KW-0808">Transferase</keyword>
<keyword id="KW-0816">Tricarboxylic acid cycle</keyword>
<sequence>MSSSPSPFGQNEWLVEEMYRKFREDPSSVDPSWHEFLVDYNPEPTTDSSASENGQQTRTAAPKAPPEPAPAPAPKTPDSKTPDSKSQAPKQDSKPQESKPQAKAKPAESKSSTKPADAKSEKSGKSGTNGAAKPAAQPADDSDQNQVLRGAAAAVAKNMSASLDVPTATSVRAIPAKLMIDNRVVINNHLKRTRGGKISFTHLIGYAIVAAVKKFPNMNRHFAEVDGKPNAVTPAHTNLGLAIDLQGKDGNRQLVVAAIKKADTMRFGQFIAAYEDIVRRARDGKLTAEDFSGVTISLTNPGTIGTVHSVPRLMRGQGAIIGVGAMEYPAEFQGASEERIADLGIGKLITLTSTYDHRIIQGAESGDFLRTVHQLLLSDDFFDEIFRELGIPYEPVRWRTDNPDSIEDKNARVIELIAAYRNRGHLMADIDPLRLDSNRFRSHPDLDVLTHGLTLWDLDREFKVNGFAGAERKKLRDVLAVLRDAYCRHIGVEYTHILEPEQQQWLQERIEGKHEKPTVAQQKYILSRLNAAEAFETFLQTKYVGQKRFSLEGAETVIPAMDAVIDQCAEHALDEVVIGMPHRGRLNVLANIVGKPYSQIFSEFEGNLNPSQAHGSGDVKYHLGSSGTYLQMFGDNDITVSLTANPSHLEAVDPVMEGLVRAKQDLLDKGDTEDGYTVVPLMLHGDAAFAGQGVVAETLNLALLRGYRTGGTIHLIVNNQIGFTTSPAAAKSSEYCTDVAKMIGAPIFHVNGDDPEAAVWVSRLAVDFRQKFKKDVVIDLLCYRRRGHNEGDDPSMTQPSMYDVIDTKRGVRKSYTEALIGRGDISMKEAEDALRDYQGQLEQVFNEVRELEKHEIEPSESVEADQQIPAKLATAVDKSLLARIGDAHLAVPEGFTVHPRVKPVLEKRREMAYEGKVDWAFAELLALGTMISEGKLVRLSGQDTRRGTFTQRHSVVIDRKTGKEFTPLQLLATDSDGNPTGGKFLVYDSPLSEFAAVGFEYGYSVGNPDAMVLWEAQFGDFINGAQSIIDEFISSGEAKWGQLSDVVLLLPHGHEGQGPDHTSGRIERFLQLWAEGSMTIALPSTPANYFHLLRRHSLDGIQRPLIVFTPKSMLRNKAAVSDIRDFTEQKFRSVLEEPTYTDGDGDRNKVTRILLTSGKIYYELVARKNKESRDDVAIVRIEQLAPLPKRRLAETLDKYPNVEEKFWVQEEPANQGAWPTFGLTLPEMLPDHFTGIKRISRRAMSAPSSGSSKVHAVEQQEILDEAFAP</sequence>
<name>KGD_MYCSK</name>
<dbReference type="EC" id="2.2.1.5"/>
<dbReference type="EC" id="4.1.1.71"/>
<dbReference type="EC" id="1.2.4.2"/>
<dbReference type="EC" id="2.3.1.61"/>
<dbReference type="EMBL" id="CP000518">
    <property type="protein sequence ID" value="ABL93239.1"/>
    <property type="molecule type" value="Genomic_DNA"/>
</dbReference>
<dbReference type="SMR" id="A1UK81"/>
<dbReference type="STRING" id="189918.Mkms_4047"/>
<dbReference type="KEGG" id="mkm:Mkms_4047"/>
<dbReference type="HOGENOM" id="CLU_004709_1_0_11"/>
<dbReference type="OrthoDB" id="9759785at2"/>
<dbReference type="UniPathway" id="UPA00223">
    <property type="reaction ID" value="UER00997"/>
</dbReference>
<dbReference type="UniPathway" id="UPA00223">
    <property type="reaction ID" value="UER01001"/>
</dbReference>
<dbReference type="GO" id="GO:0005829">
    <property type="term" value="C:cytosol"/>
    <property type="evidence" value="ECO:0007669"/>
    <property type="project" value="TreeGrafter"/>
</dbReference>
<dbReference type="GO" id="GO:0045252">
    <property type="term" value="C:oxoglutarate dehydrogenase complex"/>
    <property type="evidence" value="ECO:0007669"/>
    <property type="project" value="TreeGrafter"/>
</dbReference>
<dbReference type="GO" id="GO:0050439">
    <property type="term" value="F:2-hydroxy-3-oxoadipate synthase activity"/>
    <property type="evidence" value="ECO:0007669"/>
    <property type="project" value="UniProtKB-EC"/>
</dbReference>
<dbReference type="GO" id="GO:0008683">
    <property type="term" value="F:2-oxoglutarate decarboxylase activity"/>
    <property type="evidence" value="ECO:0007669"/>
    <property type="project" value="UniProtKB-EC"/>
</dbReference>
<dbReference type="GO" id="GO:0004149">
    <property type="term" value="F:dihydrolipoyllysine-residue succinyltransferase activity"/>
    <property type="evidence" value="ECO:0007669"/>
    <property type="project" value="UniProtKB-EC"/>
</dbReference>
<dbReference type="GO" id="GO:0000287">
    <property type="term" value="F:magnesium ion binding"/>
    <property type="evidence" value="ECO:0007669"/>
    <property type="project" value="UniProtKB-ARBA"/>
</dbReference>
<dbReference type="GO" id="GO:0004591">
    <property type="term" value="F:oxoglutarate dehydrogenase (succinyl-transferring) activity"/>
    <property type="evidence" value="ECO:0007669"/>
    <property type="project" value="UniProtKB-EC"/>
</dbReference>
<dbReference type="GO" id="GO:0030976">
    <property type="term" value="F:thiamine pyrophosphate binding"/>
    <property type="evidence" value="ECO:0007669"/>
    <property type="project" value="InterPro"/>
</dbReference>
<dbReference type="GO" id="GO:0006099">
    <property type="term" value="P:tricarboxylic acid cycle"/>
    <property type="evidence" value="ECO:0007669"/>
    <property type="project" value="UniProtKB-UniPathway"/>
</dbReference>
<dbReference type="CDD" id="cd02016">
    <property type="entry name" value="TPP_E1_OGDC_like"/>
    <property type="match status" value="1"/>
</dbReference>
<dbReference type="FunFam" id="3.40.50.11610:FF:000002">
    <property type="entry name" value="2-oxoglutarate dehydrogenase E1 component"/>
    <property type="match status" value="1"/>
</dbReference>
<dbReference type="FunFam" id="3.40.50.970:FF:000018">
    <property type="entry name" value="2-oxoglutarate dehydrogenase E1 component"/>
    <property type="match status" value="1"/>
</dbReference>
<dbReference type="Gene3D" id="3.40.50.12470">
    <property type="match status" value="1"/>
</dbReference>
<dbReference type="Gene3D" id="3.40.50.970">
    <property type="match status" value="1"/>
</dbReference>
<dbReference type="Gene3D" id="3.30.559.10">
    <property type="entry name" value="Chloramphenicol acetyltransferase-like domain"/>
    <property type="match status" value="1"/>
</dbReference>
<dbReference type="Gene3D" id="3.40.50.11610">
    <property type="entry name" value="Multifunctional 2-oxoglutarate metabolism enzyme, C-terminal domain"/>
    <property type="match status" value="1"/>
</dbReference>
<dbReference type="Gene3D" id="1.10.287.1150">
    <property type="entry name" value="TPP helical domain"/>
    <property type="match status" value="1"/>
</dbReference>
<dbReference type="InterPro" id="IPR001078">
    <property type="entry name" value="2-oxoacid_DH_actylTfrase"/>
</dbReference>
<dbReference type="InterPro" id="IPR032106">
    <property type="entry name" value="2-oxogl_dehyd_N"/>
</dbReference>
<dbReference type="InterPro" id="IPR011603">
    <property type="entry name" value="2oxoglutarate_DH_E1"/>
</dbReference>
<dbReference type="InterPro" id="IPR023213">
    <property type="entry name" value="CAT-like_dom_sf"/>
</dbReference>
<dbReference type="InterPro" id="IPR001017">
    <property type="entry name" value="DH_E1"/>
</dbReference>
<dbReference type="InterPro" id="IPR042179">
    <property type="entry name" value="KGD_C_sf"/>
</dbReference>
<dbReference type="InterPro" id="IPR031717">
    <property type="entry name" value="ODO-1/KGD_C"/>
</dbReference>
<dbReference type="InterPro" id="IPR029061">
    <property type="entry name" value="THDP-binding"/>
</dbReference>
<dbReference type="InterPro" id="IPR005475">
    <property type="entry name" value="Transketolase-like_Pyr-bd"/>
</dbReference>
<dbReference type="NCBIfam" id="TIGR00239">
    <property type="entry name" value="2oxo_dh_E1"/>
    <property type="match status" value="1"/>
</dbReference>
<dbReference type="NCBIfam" id="NF006914">
    <property type="entry name" value="PRK09404.1"/>
    <property type="match status" value="1"/>
</dbReference>
<dbReference type="NCBIfam" id="NF008907">
    <property type="entry name" value="PRK12270.1"/>
    <property type="match status" value="1"/>
</dbReference>
<dbReference type="PANTHER" id="PTHR23152:SF4">
    <property type="entry name" value="2-OXOADIPATE DEHYDROGENASE COMPLEX COMPONENT E1"/>
    <property type="match status" value="1"/>
</dbReference>
<dbReference type="PANTHER" id="PTHR23152">
    <property type="entry name" value="2-OXOGLUTARATE DEHYDROGENASE"/>
    <property type="match status" value="1"/>
</dbReference>
<dbReference type="Pfam" id="PF00198">
    <property type="entry name" value="2-oxoacid_dh"/>
    <property type="match status" value="1"/>
</dbReference>
<dbReference type="Pfam" id="PF16078">
    <property type="entry name" value="2-oxogl_dehyd_N"/>
    <property type="match status" value="1"/>
</dbReference>
<dbReference type="Pfam" id="PF00676">
    <property type="entry name" value="E1_dh"/>
    <property type="match status" value="1"/>
</dbReference>
<dbReference type="Pfam" id="PF16870">
    <property type="entry name" value="OxoGdeHyase_C"/>
    <property type="match status" value="1"/>
</dbReference>
<dbReference type="Pfam" id="PF02779">
    <property type="entry name" value="Transket_pyr"/>
    <property type="match status" value="1"/>
</dbReference>
<dbReference type="PIRSF" id="PIRSF000157">
    <property type="entry name" value="Oxoglu_dh_E1"/>
    <property type="match status" value="1"/>
</dbReference>
<dbReference type="SMART" id="SM00861">
    <property type="entry name" value="Transket_pyr"/>
    <property type="match status" value="1"/>
</dbReference>
<dbReference type="SUPFAM" id="SSF52777">
    <property type="entry name" value="CoA-dependent acyltransferases"/>
    <property type="match status" value="1"/>
</dbReference>
<dbReference type="SUPFAM" id="SSF52518">
    <property type="entry name" value="Thiamin diphosphate-binding fold (THDP-binding)"/>
    <property type="match status" value="2"/>
</dbReference>
<proteinExistence type="inferred from homology"/>
<reference key="1">
    <citation type="submission" date="2006-12" db="EMBL/GenBank/DDBJ databases">
        <title>Complete sequence of chromosome of Mycobacterium sp. KMS.</title>
        <authorList>
            <consortium name="US DOE Joint Genome Institute"/>
            <person name="Copeland A."/>
            <person name="Lucas S."/>
            <person name="Lapidus A."/>
            <person name="Barry K."/>
            <person name="Detter J.C."/>
            <person name="Glavina del Rio T."/>
            <person name="Hammon N."/>
            <person name="Israni S."/>
            <person name="Dalin E."/>
            <person name="Tice H."/>
            <person name="Pitluck S."/>
            <person name="Kiss H."/>
            <person name="Brettin T."/>
            <person name="Bruce D."/>
            <person name="Han C."/>
            <person name="Tapia R."/>
            <person name="Gilna P."/>
            <person name="Schmutz J."/>
            <person name="Larimer F."/>
            <person name="Land M."/>
            <person name="Hauser L."/>
            <person name="Kyrpides N."/>
            <person name="Mikhailova N."/>
            <person name="Miller C.D."/>
            <person name="Richardson P."/>
        </authorList>
    </citation>
    <scope>NUCLEOTIDE SEQUENCE [LARGE SCALE GENOMIC DNA]</scope>
    <source>
        <strain>KMS</strain>
    </source>
</reference>
<gene>
    <name type="primary">kgd</name>
    <name type="ordered locus">Mkms_4047</name>
</gene>
<accession>A1UK81</accession>
<protein>
    <recommendedName>
        <fullName>Multifunctional 2-oxoglutarate metabolism enzyme</fullName>
    </recommendedName>
    <alternativeName>
        <fullName>2-hydroxy-3-oxoadipate synthase</fullName>
        <shortName>HOA synthase</shortName>
        <shortName>HOAS</shortName>
        <ecNumber>2.2.1.5</ecNumber>
    </alternativeName>
    <alternativeName>
        <fullName>2-oxoglutarate carboxy-lyase</fullName>
    </alternativeName>
    <alternativeName>
        <fullName>2-oxoglutarate decarboxylase</fullName>
    </alternativeName>
    <alternativeName>
        <fullName>Alpha-ketoglutarate decarboxylase</fullName>
        <shortName>KG decarboxylase</shortName>
        <shortName>KGD</shortName>
        <ecNumber>4.1.1.71</ecNumber>
    </alternativeName>
    <alternativeName>
        <fullName>Alpha-ketoglutarate-glyoxylate carboligase</fullName>
    </alternativeName>
    <domain>
        <recommendedName>
            <fullName>2-oxoglutarate dehydrogenase E1 component</fullName>
            <shortName>ODH E1 component</shortName>
            <ecNumber>1.2.4.2</ecNumber>
        </recommendedName>
        <alternativeName>
            <fullName>Alpha-ketoglutarate dehydrogenase E1 component</fullName>
            <shortName>KDH E1 component</shortName>
        </alternativeName>
    </domain>
    <domain>
        <recommendedName>
            <fullName>Dihydrolipoyllysine-residue succinyltransferase component of 2-oxoglutarate dehydrogenase complex</fullName>
            <ecNumber>2.3.1.61</ecNumber>
        </recommendedName>
        <alternativeName>
            <fullName>2-oxoglutarate dehydrogenase complex E2 component</fullName>
            <shortName>ODH E2 component</shortName>
            <shortName>OGDC-E2</shortName>
        </alternativeName>
        <alternativeName>
            <fullName>Dihydrolipoamide succinyltransferase</fullName>
        </alternativeName>
    </domain>
</protein>